<feature type="chain" id="PRO_0000410353" description="High osmolarity signaling protein SHO1">
    <location>
        <begin position="1"/>
        <end position="322"/>
    </location>
</feature>
<feature type="topological domain" description="Cytoplasmic" evidence="2">
    <location>
        <begin position="1"/>
        <end position="40"/>
    </location>
</feature>
<feature type="transmembrane region" description="Helical" evidence="2">
    <location>
        <begin position="41"/>
        <end position="61"/>
    </location>
</feature>
<feature type="topological domain" description="Extracellular" evidence="2">
    <location>
        <begin position="62"/>
        <end position="70"/>
    </location>
</feature>
<feature type="transmembrane region" description="Helical" evidence="2">
    <location>
        <begin position="71"/>
        <end position="91"/>
    </location>
</feature>
<feature type="topological domain" description="Cytoplasmic" evidence="2">
    <location>
        <begin position="92"/>
        <end position="96"/>
    </location>
</feature>
<feature type="transmembrane region" description="Helical" evidence="2">
    <location>
        <begin position="97"/>
        <end position="117"/>
    </location>
</feature>
<feature type="topological domain" description="Extracellular" evidence="2">
    <location>
        <begin position="118"/>
        <end position="129"/>
    </location>
</feature>
<feature type="transmembrane region" description="Helical" evidence="2">
    <location>
        <begin position="130"/>
        <end position="150"/>
    </location>
</feature>
<feature type="topological domain" description="Cytoplasmic" evidence="2">
    <location>
        <begin position="151"/>
        <end position="322"/>
    </location>
</feature>
<feature type="domain" description="SH3" evidence="3">
    <location>
        <begin position="263"/>
        <end position="322"/>
    </location>
</feature>
<feature type="region of interest" description="Disordered" evidence="4">
    <location>
        <begin position="159"/>
        <end position="184"/>
    </location>
</feature>
<sequence>MVTYSANYSPSFQRRSPVAVHNRRSNMARMDLNNIVGDPFALITISTSMIAWLLSFVTCVISDIQGLFPNFAWWAVGYMLCAIIGISIVLGSQTSHVYGVAIVGYLAAGLAFTSLAVNSLIYDDEASKQAAAAGFILQSMVIIVWIFYFGSSRHSSSRGYHDSMGAGKEQHHSYRNSKPISNNYGARPETTVSANQPPQMYTSAQLNGFETSSPVSGFPPTATNGADIQNRFGTTLGSQTNLGGGSTIGQDHQSTNEVSQPTEYPYRAKAIYSYEANPDDANEISFAKHEILDVSDVSGRWWQAKKASGETGIAPSNYLILI</sequence>
<keyword id="KW-1003">Cell membrane</keyword>
<keyword id="KW-0472">Membrane</keyword>
<keyword id="KW-0728">SH3 domain</keyword>
<keyword id="KW-0346">Stress response</keyword>
<keyword id="KW-0812">Transmembrane</keyword>
<keyword id="KW-1133">Transmembrane helix</keyword>
<gene>
    <name type="primary">SHO1</name>
    <name type="ORF">BDCG_03955</name>
</gene>
<reference key="1">
    <citation type="journal article" date="2015" name="PLoS Genet.">
        <title>The dynamic genome and transcriptome of the human fungal pathogen Blastomyces and close relative Emmonsia.</title>
        <authorList>
            <person name="Munoz J.F."/>
            <person name="Gauthier G.M."/>
            <person name="Desjardins C.A."/>
            <person name="Gallo J.E."/>
            <person name="Holder J."/>
            <person name="Sullivan T.D."/>
            <person name="Marty A.J."/>
            <person name="Carmen J.C."/>
            <person name="Chen Z."/>
            <person name="Ding L."/>
            <person name="Gujja S."/>
            <person name="Magrini V."/>
            <person name="Misas E."/>
            <person name="Mitreva M."/>
            <person name="Priest M."/>
            <person name="Saif S."/>
            <person name="Whiston E.A."/>
            <person name="Young S."/>
            <person name="Zeng Q."/>
            <person name="Goldman W.E."/>
            <person name="Mardis E.R."/>
            <person name="Taylor J.W."/>
            <person name="McEwen J.G."/>
            <person name="Clay O.K."/>
            <person name="Klein B.S."/>
            <person name="Cuomo C.A."/>
        </authorList>
    </citation>
    <scope>NUCLEOTIDE SEQUENCE [LARGE SCALE GENOMIC DNA]</scope>
    <source>
        <strain>ER-3 / ATCC MYA-2586</strain>
    </source>
</reference>
<dbReference type="EMBL" id="EQ999976">
    <property type="protein sequence ID" value="EEQ88835.2"/>
    <property type="molecule type" value="Genomic_DNA"/>
</dbReference>
<dbReference type="SMR" id="C5GIQ8"/>
<dbReference type="STRING" id="559297.C5GIQ8"/>
<dbReference type="eggNOG" id="ENOG502QW7A">
    <property type="taxonomic scope" value="Eukaryota"/>
</dbReference>
<dbReference type="HOGENOM" id="CLU_043316_1_0_1"/>
<dbReference type="OMA" id="NIVWIFY"/>
<dbReference type="GO" id="GO:0005886">
    <property type="term" value="C:plasma membrane"/>
    <property type="evidence" value="ECO:0007669"/>
    <property type="project" value="UniProtKB-SubCell"/>
</dbReference>
<dbReference type="CDD" id="cd11855">
    <property type="entry name" value="SH3_Sho1p"/>
    <property type="match status" value="1"/>
</dbReference>
<dbReference type="FunFam" id="2.30.30.40:FF:000213">
    <property type="entry name" value="High osmolarity signaling protein SHO1"/>
    <property type="match status" value="1"/>
</dbReference>
<dbReference type="Gene3D" id="2.30.30.40">
    <property type="entry name" value="SH3 Domains"/>
    <property type="match status" value="1"/>
</dbReference>
<dbReference type="InterPro" id="IPR036028">
    <property type="entry name" value="SH3-like_dom_sf"/>
</dbReference>
<dbReference type="InterPro" id="IPR001452">
    <property type="entry name" value="SH3_domain"/>
</dbReference>
<dbReference type="InterPro" id="IPR035522">
    <property type="entry name" value="Sho1_SH3"/>
</dbReference>
<dbReference type="Pfam" id="PF00018">
    <property type="entry name" value="SH3_1"/>
    <property type="match status" value="1"/>
</dbReference>
<dbReference type="SMART" id="SM00326">
    <property type="entry name" value="SH3"/>
    <property type="match status" value="1"/>
</dbReference>
<dbReference type="SUPFAM" id="SSF50044">
    <property type="entry name" value="SH3-domain"/>
    <property type="match status" value="1"/>
</dbReference>
<dbReference type="PROSITE" id="PS50002">
    <property type="entry name" value="SH3"/>
    <property type="match status" value="1"/>
</dbReference>
<proteinExistence type="inferred from homology"/>
<name>SHO1_AJEDR</name>
<evidence type="ECO:0000250" key="1"/>
<evidence type="ECO:0000255" key="2"/>
<evidence type="ECO:0000255" key="3">
    <source>
        <dbReference type="PROSITE-ProRule" id="PRU00192"/>
    </source>
</evidence>
<evidence type="ECO:0000256" key="4">
    <source>
        <dbReference type="SAM" id="MobiDB-lite"/>
    </source>
</evidence>
<evidence type="ECO:0000305" key="5"/>
<organism>
    <name type="scientific">Ajellomyces dermatitidis (strain ER-3 / ATCC MYA-2586)</name>
    <name type="common">Blastomyces dermatitidis</name>
    <dbReference type="NCBI Taxonomy" id="559297"/>
    <lineage>
        <taxon>Eukaryota</taxon>
        <taxon>Fungi</taxon>
        <taxon>Dikarya</taxon>
        <taxon>Ascomycota</taxon>
        <taxon>Pezizomycotina</taxon>
        <taxon>Eurotiomycetes</taxon>
        <taxon>Eurotiomycetidae</taxon>
        <taxon>Onygenales</taxon>
        <taxon>Ajellomycetaceae</taxon>
        <taxon>Blastomyces</taxon>
    </lineage>
</organism>
<comment type="function">
    <text evidence="1">Plasma membrane osmosensor that activates the high osmolarity glycerol (HOG) MAPK signaling pathway in response to high osmolarity.</text>
</comment>
<comment type="subunit">
    <text evidence="1">Forms homooligomers.</text>
</comment>
<comment type="subcellular location">
    <subcellularLocation>
        <location evidence="1">Cell membrane</location>
        <topology evidence="1">Multi-pass membrane protein</topology>
    </subcellularLocation>
</comment>
<comment type="similarity">
    <text evidence="5">Belongs to the SHO1 family.</text>
</comment>
<protein>
    <recommendedName>
        <fullName>High osmolarity signaling protein SHO1</fullName>
    </recommendedName>
    <alternativeName>
        <fullName>Osmosensor SHO1</fullName>
    </alternativeName>
</protein>
<accession>C5GIQ8</accession>